<protein>
    <recommendedName>
        <fullName evidence="1">Fructose-1,6-bisphosphatase class 1</fullName>
        <shortName evidence="1">FBPase class 1</shortName>
        <ecNumber evidence="1">3.1.3.11</ecNumber>
    </recommendedName>
    <alternativeName>
        <fullName evidence="1">D-fructose-1,6-bisphosphate 1-phosphohydrolase class 1</fullName>
    </alternativeName>
</protein>
<keyword id="KW-0119">Carbohydrate metabolism</keyword>
<keyword id="KW-0963">Cytoplasm</keyword>
<keyword id="KW-0378">Hydrolase</keyword>
<keyword id="KW-0460">Magnesium</keyword>
<keyword id="KW-0479">Metal-binding</keyword>
<reference key="1">
    <citation type="journal article" date="2006" name="Proc. Natl. Acad. Sci. U.S.A.">
        <title>Identification of genes subject to positive selection in uropathogenic strains of Escherichia coli: a comparative genomics approach.</title>
        <authorList>
            <person name="Chen S.L."/>
            <person name="Hung C.-S."/>
            <person name="Xu J."/>
            <person name="Reigstad C.S."/>
            <person name="Magrini V."/>
            <person name="Sabo A."/>
            <person name="Blasiar D."/>
            <person name="Bieri T."/>
            <person name="Meyer R.R."/>
            <person name="Ozersky P."/>
            <person name="Armstrong J.R."/>
            <person name="Fulton R.S."/>
            <person name="Latreille J.P."/>
            <person name="Spieth J."/>
            <person name="Hooton T.M."/>
            <person name="Mardis E.R."/>
            <person name="Hultgren S.J."/>
            <person name="Gordon J.I."/>
        </authorList>
    </citation>
    <scope>NUCLEOTIDE SEQUENCE [LARGE SCALE GENOMIC DNA]</scope>
    <source>
        <strain>UTI89 / UPEC</strain>
    </source>
</reference>
<dbReference type="EC" id="3.1.3.11" evidence="1"/>
<dbReference type="EMBL" id="CP000243">
    <property type="protein sequence ID" value="ABE10240.1"/>
    <property type="status" value="ALT_INIT"/>
    <property type="molecule type" value="Genomic_DNA"/>
</dbReference>
<dbReference type="RefSeq" id="WP_000853753.1">
    <property type="nucleotide sequence ID" value="NZ_CP064825.1"/>
</dbReference>
<dbReference type="SMR" id="Q1R324"/>
<dbReference type="GeneID" id="86861371"/>
<dbReference type="KEGG" id="eci:UTI89_C4836"/>
<dbReference type="HOGENOM" id="CLU_039977_2_2_6"/>
<dbReference type="UniPathway" id="UPA00138"/>
<dbReference type="Proteomes" id="UP000001952">
    <property type="component" value="Chromosome"/>
</dbReference>
<dbReference type="GO" id="GO:0005829">
    <property type="term" value="C:cytosol"/>
    <property type="evidence" value="ECO:0007669"/>
    <property type="project" value="TreeGrafter"/>
</dbReference>
<dbReference type="GO" id="GO:0042132">
    <property type="term" value="F:fructose 1,6-bisphosphate 1-phosphatase activity"/>
    <property type="evidence" value="ECO:0007669"/>
    <property type="project" value="UniProtKB-UniRule"/>
</dbReference>
<dbReference type="GO" id="GO:0000287">
    <property type="term" value="F:magnesium ion binding"/>
    <property type="evidence" value="ECO:0007669"/>
    <property type="project" value="UniProtKB-UniRule"/>
</dbReference>
<dbReference type="GO" id="GO:0030388">
    <property type="term" value="P:fructose 1,6-bisphosphate metabolic process"/>
    <property type="evidence" value="ECO:0007669"/>
    <property type="project" value="TreeGrafter"/>
</dbReference>
<dbReference type="GO" id="GO:0006002">
    <property type="term" value="P:fructose 6-phosphate metabolic process"/>
    <property type="evidence" value="ECO:0007669"/>
    <property type="project" value="TreeGrafter"/>
</dbReference>
<dbReference type="GO" id="GO:0006000">
    <property type="term" value="P:fructose metabolic process"/>
    <property type="evidence" value="ECO:0007669"/>
    <property type="project" value="TreeGrafter"/>
</dbReference>
<dbReference type="GO" id="GO:0006094">
    <property type="term" value="P:gluconeogenesis"/>
    <property type="evidence" value="ECO:0007669"/>
    <property type="project" value="UniProtKB-UniRule"/>
</dbReference>
<dbReference type="GO" id="GO:0005986">
    <property type="term" value="P:sucrose biosynthetic process"/>
    <property type="evidence" value="ECO:0007669"/>
    <property type="project" value="TreeGrafter"/>
</dbReference>
<dbReference type="CDD" id="cd00354">
    <property type="entry name" value="FBPase"/>
    <property type="match status" value="1"/>
</dbReference>
<dbReference type="FunFam" id="3.30.540.10:FF:000002">
    <property type="entry name" value="Fructose-1,6-bisphosphatase class 1"/>
    <property type="match status" value="1"/>
</dbReference>
<dbReference type="FunFam" id="3.40.190.80:FF:000001">
    <property type="entry name" value="Fructose-1,6-bisphosphatase class 1"/>
    <property type="match status" value="1"/>
</dbReference>
<dbReference type="Gene3D" id="3.40.190.80">
    <property type="match status" value="1"/>
</dbReference>
<dbReference type="Gene3D" id="3.30.540.10">
    <property type="entry name" value="Fructose-1,6-Bisphosphatase, subunit A, domain 1"/>
    <property type="match status" value="1"/>
</dbReference>
<dbReference type="HAMAP" id="MF_01855">
    <property type="entry name" value="FBPase_class1"/>
    <property type="match status" value="1"/>
</dbReference>
<dbReference type="InterPro" id="IPR044015">
    <property type="entry name" value="FBPase_C_dom"/>
</dbReference>
<dbReference type="InterPro" id="IPR000146">
    <property type="entry name" value="FBPase_class-1"/>
</dbReference>
<dbReference type="InterPro" id="IPR033391">
    <property type="entry name" value="FBPase_N"/>
</dbReference>
<dbReference type="InterPro" id="IPR028343">
    <property type="entry name" value="FBPtase"/>
</dbReference>
<dbReference type="InterPro" id="IPR020548">
    <property type="entry name" value="Fructose_bisphosphatase_AS"/>
</dbReference>
<dbReference type="NCBIfam" id="NF006778">
    <property type="entry name" value="PRK09293.1-1"/>
    <property type="match status" value="1"/>
</dbReference>
<dbReference type="NCBIfam" id="NF006779">
    <property type="entry name" value="PRK09293.1-3"/>
    <property type="match status" value="1"/>
</dbReference>
<dbReference type="PANTHER" id="PTHR11556">
    <property type="entry name" value="FRUCTOSE-1,6-BISPHOSPHATASE-RELATED"/>
    <property type="match status" value="1"/>
</dbReference>
<dbReference type="PANTHER" id="PTHR11556:SF35">
    <property type="entry name" value="SEDOHEPTULOSE-1,7-BISPHOSPHATASE, CHLOROPLASTIC"/>
    <property type="match status" value="1"/>
</dbReference>
<dbReference type="Pfam" id="PF00316">
    <property type="entry name" value="FBPase"/>
    <property type="match status" value="1"/>
</dbReference>
<dbReference type="Pfam" id="PF18913">
    <property type="entry name" value="FBPase_C"/>
    <property type="match status" value="1"/>
</dbReference>
<dbReference type="PIRSF" id="PIRSF500210">
    <property type="entry name" value="FBPtase"/>
    <property type="match status" value="1"/>
</dbReference>
<dbReference type="PIRSF" id="PIRSF000904">
    <property type="entry name" value="FBPtase_SBPase"/>
    <property type="match status" value="1"/>
</dbReference>
<dbReference type="PRINTS" id="PR00115">
    <property type="entry name" value="F16BPHPHTASE"/>
</dbReference>
<dbReference type="SUPFAM" id="SSF56655">
    <property type="entry name" value="Carbohydrate phosphatase"/>
    <property type="match status" value="1"/>
</dbReference>
<dbReference type="PROSITE" id="PS00124">
    <property type="entry name" value="FBPASE"/>
    <property type="match status" value="1"/>
</dbReference>
<feature type="chain" id="PRO_0000364548" description="Fructose-1,6-bisphosphatase class 1">
    <location>
        <begin position="1"/>
        <end position="332"/>
    </location>
</feature>
<feature type="binding site" evidence="1">
    <location>
        <position position="89"/>
    </location>
    <ligand>
        <name>Mg(2+)</name>
        <dbReference type="ChEBI" id="CHEBI:18420"/>
        <label>1</label>
    </ligand>
</feature>
<feature type="binding site" evidence="1">
    <location>
        <position position="110"/>
    </location>
    <ligand>
        <name>Mg(2+)</name>
        <dbReference type="ChEBI" id="CHEBI:18420"/>
        <label>1</label>
    </ligand>
</feature>
<feature type="binding site" evidence="1">
    <location>
        <position position="110"/>
    </location>
    <ligand>
        <name>Mg(2+)</name>
        <dbReference type="ChEBI" id="CHEBI:18420"/>
        <label>2</label>
    </ligand>
</feature>
<feature type="binding site" evidence="1">
    <location>
        <position position="112"/>
    </location>
    <ligand>
        <name>Mg(2+)</name>
        <dbReference type="ChEBI" id="CHEBI:18420"/>
        <label>1</label>
    </ligand>
</feature>
<feature type="binding site" evidence="1">
    <location>
        <begin position="113"/>
        <end position="116"/>
    </location>
    <ligand>
        <name>substrate</name>
    </ligand>
</feature>
<feature type="binding site" evidence="1">
    <location>
        <position position="113"/>
    </location>
    <ligand>
        <name>Mg(2+)</name>
        <dbReference type="ChEBI" id="CHEBI:18420"/>
        <label>2</label>
    </ligand>
</feature>
<feature type="binding site" evidence="1">
    <location>
        <position position="206"/>
    </location>
    <ligand>
        <name>substrate</name>
    </ligand>
</feature>
<feature type="binding site" evidence="1">
    <location>
        <position position="239"/>
    </location>
    <ligand>
        <name>substrate</name>
    </ligand>
</feature>
<feature type="binding site" evidence="1">
    <location>
        <begin position="257"/>
        <end position="259"/>
    </location>
    <ligand>
        <name>substrate</name>
    </ligand>
</feature>
<feature type="binding site" evidence="1">
    <location>
        <position position="269"/>
    </location>
    <ligand>
        <name>substrate</name>
    </ligand>
</feature>
<feature type="binding site" evidence="1">
    <location>
        <position position="275"/>
    </location>
    <ligand>
        <name>Mg(2+)</name>
        <dbReference type="ChEBI" id="CHEBI:18420"/>
        <label>2</label>
    </ligand>
</feature>
<sequence>MKTLGEFIVEKQHEFSHATGELTALLSAIKLGAKIIHRDINKAGLVDILGASGAENVQGEVQQKLDLFANEKLKAALKARDIVAGIASEEEDEIVVFEGCEHAKYVVLMDPLDGSSNIDVNVSVGTIFSIYRRVTPVGTPVTEEDFLQPGNKQVAAGYVVYGSSTMLVYTTGCGVHAFTYDPSLGVFCLCQERMRFPEKGKTYSINEGNYIKFPNGVKKYIKFCQEEDKSTNRPYTSRYIGSLVADFHRNLLKGGIYLYPSTASHPDGKLRLLYECNPMAFLAEQAGGKASDGKERILDIIPETLHQRRSFFVGNDHMVEDVERFIREFPDA</sequence>
<comment type="catalytic activity">
    <reaction evidence="1">
        <text>beta-D-fructose 1,6-bisphosphate + H2O = beta-D-fructose 6-phosphate + phosphate</text>
        <dbReference type="Rhea" id="RHEA:11064"/>
        <dbReference type="ChEBI" id="CHEBI:15377"/>
        <dbReference type="ChEBI" id="CHEBI:32966"/>
        <dbReference type="ChEBI" id="CHEBI:43474"/>
        <dbReference type="ChEBI" id="CHEBI:57634"/>
        <dbReference type="EC" id="3.1.3.11"/>
    </reaction>
</comment>
<comment type="cofactor">
    <cofactor evidence="1">
        <name>Mg(2+)</name>
        <dbReference type="ChEBI" id="CHEBI:18420"/>
    </cofactor>
    <text evidence="1">Binds 2 magnesium ions per subunit.</text>
</comment>
<comment type="pathway">
    <text evidence="1">Carbohydrate biosynthesis; gluconeogenesis.</text>
</comment>
<comment type="subunit">
    <text evidence="1">Homotetramer.</text>
</comment>
<comment type="subcellular location">
    <subcellularLocation>
        <location evidence="1">Cytoplasm</location>
    </subcellularLocation>
</comment>
<comment type="similarity">
    <text evidence="1">Belongs to the FBPase class 1 family.</text>
</comment>
<comment type="sequence caution" evidence="2">
    <conflict type="erroneous initiation">
        <sequence resource="EMBL-CDS" id="ABE10240"/>
    </conflict>
</comment>
<gene>
    <name evidence="1" type="primary">fbp</name>
    <name type="ordered locus">UTI89_C4836</name>
</gene>
<accession>Q1R324</accession>
<organism>
    <name type="scientific">Escherichia coli (strain UTI89 / UPEC)</name>
    <dbReference type="NCBI Taxonomy" id="364106"/>
    <lineage>
        <taxon>Bacteria</taxon>
        <taxon>Pseudomonadati</taxon>
        <taxon>Pseudomonadota</taxon>
        <taxon>Gammaproteobacteria</taxon>
        <taxon>Enterobacterales</taxon>
        <taxon>Enterobacteriaceae</taxon>
        <taxon>Escherichia</taxon>
    </lineage>
</organism>
<name>F16PA_ECOUT</name>
<proteinExistence type="inferred from homology"/>
<evidence type="ECO:0000255" key="1">
    <source>
        <dbReference type="HAMAP-Rule" id="MF_01855"/>
    </source>
</evidence>
<evidence type="ECO:0000305" key="2"/>